<dbReference type="EC" id="1.2.1.38" evidence="1"/>
<dbReference type="EMBL" id="AM849034">
    <property type="protein sequence ID" value="CAQ01347.1"/>
    <property type="molecule type" value="Genomic_DNA"/>
</dbReference>
<dbReference type="RefSeq" id="WP_012298625.1">
    <property type="nucleotide sequence ID" value="NZ_MZMN01000003.1"/>
</dbReference>
<dbReference type="SMR" id="B0RHD0"/>
<dbReference type="STRING" id="31964.CMS1231"/>
<dbReference type="KEGG" id="cms:CMS1231"/>
<dbReference type="eggNOG" id="COG0002">
    <property type="taxonomic scope" value="Bacteria"/>
</dbReference>
<dbReference type="HOGENOM" id="CLU_006384_0_0_11"/>
<dbReference type="OrthoDB" id="9801289at2"/>
<dbReference type="UniPathway" id="UPA00068">
    <property type="reaction ID" value="UER00108"/>
</dbReference>
<dbReference type="Proteomes" id="UP000001318">
    <property type="component" value="Chromosome"/>
</dbReference>
<dbReference type="GO" id="GO:0005737">
    <property type="term" value="C:cytoplasm"/>
    <property type="evidence" value="ECO:0007669"/>
    <property type="project" value="UniProtKB-SubCell"/>
</dbReference>
<dbReference type="GO" id="GO:0003942">
    <property type="term" value="F:N-acetyl-gamma-glutamyl-phosphate reductase activity"/>
    <property type="evidence" value="ECO:0007669"/>
    <property type="project" value="UniProtKB-UniRule"/>
</dbReference>
<dbReference type="GO" id="GO:0051287">
    <property type="term" value="F:NAD binding"/>
    <property type="evidence" value="ECO:0007669"/>
    <property type="project" value="InterPro"/>
</dbReference>
<dbReference type="GO" id="GO:0070401">
    <property type="term" value="F:NADP+ binding"/>
    <property type="evidence" value="ECO:0007669"/>
    <property type="project" value="InterPro"/>
</dbReference>
<dbReference type="GO" id="GO:0006526">
    <property type="term" value="P:L-arginine biosynthetic process"/>
    <property type="evidence" value="ECO:0007669"/>
    <property type="project" value="UniProtKB-UniRule"/>
</dbReference>
<dbReference type="CDD" id="cd24148">
    <property type="entry name" value="AGPR_1_actinobacAGPR_like"/>
    <property type="match status" value="1"/>
</dbReference>
<dbReference type="CDD" id="cd23934">
    <property type="entry name" value="AGPR_1_C"/>
    <property type="match status" value="1"/>
</dbReference>
<dbReference type="Gene3D" id="3.30.360.10">
    <property type="entry name" value="Dihydrodipicolinate Reductase, domain 2"/>
    <property type="match status" value="1"/>
</dbReference>
<dbReference type="Gene3D" id="3.40.50.720">
    <property type="entry name" value="NAD(P)-binding Rossmann-like Domain"/>
    <property type="match status" value="1"/>
</dbReference>
<dbReference type="HAMAP" id="MF_00150">
    <property type="entry name" value="ArgC_type1"/>
    <property type="match status" value="1"/>
</dbReference>
<dbReference type="InterPro" id="IPR023013">
    <property type="entry name" value="AGPR_AS"/>
</dbReference>
<dbReference type="InterPro" id="IPR000706">
    <property type="entry name" value="AGPR_type-1"/>
</dbReference>
<dbReference type="InterPro" id="IPR036291">
    <property type="entry name" value="NAD(P)-bd_dom_sf"/>
</dbReference>
<dbReference type="InterPro" id="IPR050085">
    <property type="entry name" value="NAGSA_dehydrogenase"/>
</dbReference>
<dbReference type="InterPro" id="IPR000534">
    <property type="entry name" value="Semialdehyde_DH_NAD-bd"/>
</dbReference>
<dbReference type="NCBIfam" id="TIGR01850">
    <property type="entry name" value="argC"/>
    <property type="match status" value="1"/>
</dbReference>
<dbReference type="PANTHER" id="PTHR32338:SF10">
    <property type="entry name" value="N-ACETYL-GAMMA-GLUTAMYL-PHOSPHATE REDUCTASE, CHLOROPLASTIC-RELATED"/>
    <property type="match status" value="1"/>
</dbReference>
<dbReference type="PANTHER" id="PTHR32338">
    <property type="entry name" value="N-ACETYL-GAMMA-GLUTAMYL-PHOSPHATE REDUCTASE, CHLOROPLASTIC-RELATED-RELATED"/>
    <property type="match status" value="1"/>
</dbReference>
<dbReference type="Pfam" id="PF01118">
    <property type="entry name" value="Semialdhyde_dh"/>
    <property type="match status" value="1"/>
</dbReference>
<dbReference type="Pfam" id="PF22698">
    <property type="entry name" value="Semialdhyde_dhC_1"/>
    <property type="match status" value="1"/>
</dbReference>
<dbReference type="SMART" id="SM00859">
    <property type="entry name" value="Semialdhyde_dh"/>
    <property type="match status" value="1"/>
</dbReference>
<dbReference type="SUPFAM" id="SSF55347">
    <property type="entry name" value="Glyceraldehyde-3-phosphate dehydrogenase-like, C-terminal domain"/>
    <property type="match status" value="1"/>
</dbReference>
<dbReference type="SUPFAM" id="SSF51735">
    <property type="entry name" value="NAD(P)-binding Rossmann-fold domains"/>
    <property type="match status" value="1"/>
</dbReference>
<dbReference type="PROSITE" id="PS01224">
    <property type="entry name" value="ARGC"/>
    <property type="match status" value="1"/>
</dbReference>
<evidence type="ECO:0000255" key="1">
    <source>
        <dbReference type="HAMAP-Rule" id="MF_00150"/>
    </source>
</evidence>
<gene>
    <name evidence="1" type="primary">argC</name>
    <name type="ordered locus">CMS1231</name>
</gene>
<accession>B0RHD0</accession>
<keyword id="KW-0028">Amino-acid biosynthesis</keyword>
<keyword id="KW-0055">Arginine biosynthesis</keyword>
<keyword id="KW-0963">Cytoplasm</keyword>
<keyword id="KW-0521">NADP</keyword>
<keyword id="KW-0560">Oxidoreductase</keyword>
<proteinExistence type="inferred from homology"/>
<comment type="function">
    <text evidence="1">Catalyzes the NADPH-dependent reduction of N-acetyl-5-glutamyl phosphate to yield N-acetyl-L-glutamate 5-semialdehyde.</text>
</comment>
<comment type="catalytic activity">
    <reaction evidence="1">
        <text>N-acetyl-L-glutamate 5-semialdehyde + phosphate + NADP(+) = N-acetyl-L-glutamyl 5-phosphate + NADPH + H(+)</text>
        <dbReference type="Rhea" id="RHEA:21588"/>
        <dbReference type="ChEBI" id="CHEBI:15378"/>
        <dbReference type="ChEBI" id="CHEBI:29123"/>
        <dbReference type="ChEBI" id="CHEBI:43474"/>
        <dbReference type="ChEBI" id="CHEBI:57783"/>
        <dbReference type="ChEBI" id="CHEBI:57936"/>
        <dbReference type="ChEBI" id="CHEBI:58349"/>
        <dbReference type="EC" id="1.2.1.38"/>
    </reaction>
</comment>
<comment type="pathway">
    <text evidence="1">Amino-acid biosynthesis; L-arginine biosynthesis; N(2)-acetyl-L-ornithine from L-glutamate: step 3/4.</text>
</comment>
<comment type="subcellular location">
    <subcellularLocation>
        <location evidence="1">Cytoplasm</location>
    </subcellularLocation>
</comment>
<comment type="similarity">
    <text evidence="1">Belongs to the NAGSA dehydrogenase family. Type 1 subfamily.</text>
</comment>
<organism>
    <name type="scientific">Clavibacter sepedonicus</name>
    <name type="common">Clavibacter michiganensis subsp. sepedonicus</name>
    <dbReference type="NCBI Taxonomy" id="31964"/>
    <lineage>
        <taxon>Bacteria</taxon>
        <taxon>Bacillati</taxon>
        <taxon>Actinomycetota</taxon>
        <taxon>Actinomycetes</taxon>
        <taxon>Micrococcales</taxon>
        <taxon>Microbacteriaceae</taxon>
        <taxon>Clavibacter</taxon>
    </lineage>
</organism>
<protein>
    <recommendedName>
        <fullName evidence="1">N-acetyl-gamma-glutamyl-phosphate reductase</fullName>
        <shortName evidence="1">AGPR</shortName>
        <ecNumber evidence="1">1.2.1.38</ecNumber>
    </recommendedName>
    <alternativeName>
        <fullName evidence="1">N-acetyl-glutamate semialdehyde dehydrogenase</fullName>
        <shortName evidence="1">NAGSA dehydrogenase</shortName>
    </alternativeName>
</protein>
<reference key="1">
    <citation type="journal article" date="2008" name="J. Bacteriol.">
        <title>Genome of the actinomycete plant pathogen Clavibacter michiganensis subsp. sepedonicus suggests recent niche adaptation.</title>
        <authorList>
            <person name="Bentley S.D."/>
            <person name="Corton C."/>
            <person name="Brown S.E."/>
            <person name="Barron A."/>
            <person name="Clark L."/>
            <person name="Doggett J."/>
            <person name="Harris B."/>
            <person name="Ormond D."/>
            <person name="Quail M.A."/>
            <person name="May G."/>
            <person name="Francis D."/>
            <person name="Knudson D."/>
            <person name="Parkhill J."/>
            <person name="Ishimaru C.A."/>
        </authorList>
    </citation>
    <scope>NUCLEOTIDE SEQUENCE [LARGE SCALE GENOMIC DNA]</scope>
    <source>
        <strain>ATCC 33113 / DSM 20744 / JCM 9667 / LMG 2889 / ICMP 2535 / C-1</strain>
    </source>
</reference>
<feature type="chain" id="PRO_1000076728" description="N-acetyl-gamma-glutamyl-phosphate reductase">
    <location>
        <begin position="1"/>
        <end position="349"/>
    </location>
</feature>
<feature type="active site" evidence="1">
    <location>
        <position position="152"/>
    </location>
</feature>
<name>ARGC_CLASE</name>
<sequence length="349" mass="36005">MSFSVAVAGASGYAGGELLRLLADHPRLEVQTLTAFQNAGERLREVHPHLTSYADRTFVETTAEQLAGHDVVFLALPHGKSGAITAELDDQTLVVDCGADHRLVDEAAWDAFYGGDFAGAWPYGLPELLHAEEGGTQRTRLSGVKRIAVPGCNVTAITLGLQPGIRAGVIEPEDVVAVLAVGPSGAGRSLRTNLLASEILGSASAYAVGGTHRHTPEIRQNLETAGGGHVSVSFTPVLVPMARGILATATARLAPGFSAHDVRAAWELAYADEPFVHLLPEGTFPNVSDVTGSNTALVGLAIDEAAGRVVTVTAIDNLVKGTAGAAIQSANIALGLPEAMGLPVNGVAP</sequence>